<organism>
    <name type="scientific">Pseudomonas putida (strain ATCC 47054 / DSM 6125 / CFBP 8728 / NCIMB 11950 / KT2440)</name>
    <dbReference type="NCBI Taxonomy" id="160488"/>
    <lineage>
        <taxon>Bacteria</taxon>
        <taxon>Pseudomonadati</taxon>
        <taxon>Pseudomonadota</taxon>
        <taxon>Gammaproteobacteria</taxon>
        <taxon>Pseudomonadales</taxon>
        <taxon>Pseudomonadaceae</taxon>
        <taxon>Pseudomonas</taxon>
    </lineage>
</organism>
<protein>
    <recommendedName>
        <fullName evidence="1">UPF0313 protein PP_4872</fullName>
    </recommendedName>
</protein>
<keyword id="KW-0004">4Fe-4S</keyword>
<keyword id="KW-0408">Iron</keyword>
<keyword id="KW-0411">Iron-sulfur</keyword>
<keyword id="KW-0479">Metal-binding</keyword>
<keyword id="KW-1185">Reference proteome</keyword>
<keyword id="KW-0949">S-adenosyl-L-methionine</keyword>
<name>Y4872_PSEPK</name>
<proteinExistence type="inferred from homology"/>
<accession>Q88DF3</accession>
<reference key="1">
    <citation type="journal article" date="2002" name="Environ. Microbiol.">
        <title>Complete genome sequence and comparative analysis of the metabolically versatile Pseudomonas putida KT2440.</title>
        <authorList>
            <person name="Nelson K.E."/>
            <person name="Weinel C."/>
            <person name="Paulsen I.T."/>
            <person name="Dodson R.J."/>
            <person name="Hilbert H."/>
            <person name="Martins dos Santos V.A.P."/>
            <person name="Fouts D.E."/>
            <person name="Gill S.R."/>
            <person name="Pop M."/>
            <person name="Holmes M."/>
            <person name="Brinkac L.M."/>
            <person name="Beanan M.J."/>
            <person name="DeBoy R.T."/>
            <person name="Daugherty S.C."/>
            <person name="Kolonay J.F."/>
            <person name="Madupu R."/>
            <person name="Nelson W.C."/>
            <person name="White O."/>
            <person name="Peterson J.D."/>
            <person name="Khouri H.M."/>
            <person name="Hance I."/>
            <person name="Chris Lee P."/>
            <person name="Holtzapple E.K."/>
            <person name="Scanlan D."/>
            <person name="Tran K."/>
            <person name="Moazzez A."/>
            <person name="Utterback T.R."/>
            <person name="Rizzo M."/>
            <person name="Lee K."/>
            <person name="Kosack D."/>
            <person name="Moestl D."/>
            <person name="Wedler H."/>
            <person name="Lauber J."/>
            <person name="Stjepandic D."/>
            <person name="Hoheisel J."/>
            <person name="Straetz M."/>
            <person name="Heim S."/>
            <person name="Kiewitz C."/>
            <person name="Eisen J.A."/>
            <person name="Timmis K.N."/>
            <person name="Duesterhoeft A."/>
            <person name="Tuemmler B."/>
            <person name="Fraser C.M."/>
        </authorList>
    </citation>
    <scope>NUCLEOTIDE SEQUENCE [LARGE SCALE GENOMIC DNA]</scope>
    <source>
        <strain>ATCC 47054 / DSM 6125 / CFBP 8728 / NCIMB 11950 / KT2440</strain>
    </source>
</reference>
<comment type="cofactor">
    <cofactor evidence="1">
        <name>[4Fe-4S] cluster</name>
        <dbReference type="ChEBI" id="CHEBI:49883"/>
    </cofactor>
    <text evidence="1">Binds 1 [4Fe-4S] cluster. The cluster is coordinated with 3 cysteines and an exchangeable S-adenosyl-L-methionine.</text>
</comment>
<comment type="similarity">
    <text evidence="1">Belongs to the UPF0313 family.</text>
</comment>
<comment type="sequence caution" evidence="4">
    <conflict type="erroneous initiation">
        <sequence resource="EMBL-CDS" id="AAN70441"/>
    </conflict>
</comment>
<feature type="chain" id="PRO_0000076390" description="UPF0313 protein PP_4872">
    <location>
        <begin position="1"/>
        <end position="766"/>
    </location>
</feature>
<feature type="domain" description="Radical SAM core" evidence="2">
    <location>
        <begin position="371"/>
        <end position="649"/>
    </location>
</feature>
<feature type="region of interest" description="Disordered" evidence="3">
    <location>
        <begin position="670"/>
        <end position="766"/>
    </location>
</feature>
<feature type="compositionally biased region" description="Basic and acidic residues" evidence="3">
    <location>
        <begin position="723"/>
        <end position="735"/>
    </location>
</feature>
<feature type="binding site" evidence="1">
    <location>
        <position position="385"/>
    </location>
    <ligand>
        <name>[4Fe-4S] cluster</name>
        <dbReference type="ChEBI" id="CHEBI:49883"/>
        <note>4Fe-4S-S-AdoMet</note>
    </ligand>
</feature>
<feature type="binding site" evidence="1">
    <location>
        <position position="389"/>
    </location>
    <ligand>
        <name>[4Fe-4S] cluster</name>
        <dbReference type="ChEBI" id="CHEBI:49883"/>
        <note>4Fe-4S-S-AdoMet</note>
    </ligand>
</feature>
<feature type="binding site" evidence="1">
    <location>
        <position position="392"/>
    </location>
    <ligand>
        <name>[4Fe-4S] cluster</name>
        <dbReference type="ChEBI" id="CHEBI:49883"/>
        <note>4Fe-4S-S-AdoMet</note>
    </ligand>
</feature>
<gene>
    <name type="ordered locus">PP_4872</name>
</gene>
<sequence length="766" mass="86271">MQAAKPLYDYPKYWAECFGPAPFLPMSREEMDLLGWDSCDIIIVTGDAYVDHPSFGMAIIGRLLEAQGFRVGIIAQPNWQSKDDFMKLGEPNLFFGVAAGNMDSMINRYTADKKIRSDDAYTPGGLAGSRPDRASLVYSQRCKEAYKHVPIVLGGIEASLRRIAHYDYWQDKVRHSILIDASADILLFGNAERAVVEVAQRLSNGEKIETITDVRGTAFVRRDTPQGWYEIDSTRIDRPGRVDKIINPYVNTQDTQACAIEQAKGDQEDPNEAKVVQILDSPAVTREKSVIRLPSFEKVRNDPVLYAHANRVLHLETNPGNARALVQKHGEVDVWFNPPPIPMSTEEMDYVFGMPYARVPHPAYGKERIPAYEMIRFSVNIMRGCFGGCTFCSITEHEGRIIQNRSHESILHEIEEMRDKVPGFTGVVSDLGGPTANMYRIACKSPEIEKYCRKPSCVFPGICENLNTDHSSLIELYRKARALPGVKKILIASGLRYDLAVESPEYVKELVTHHVGGYLKIAPEHTERGPLDKMMKPGIGTYDRFKRMFEKFSKEAGKEQYLIPYFIAAHPGTTDEDMMNLALWLKGNGFRADQVQAFYPSPMASATAMYHSGKNPLRKVTYKSEGVEIVKSDEQRRLHKAFLRYHDPKGWPMLREALQRMGRADLIGPGKHQLIPLHQPQTDTYQSARRKNSTPAGSHKVGKDQKILTQHTGLPPRGSDGSKPWDKREKAKAEAFARNQQAAKERKEASKGGKGNKKPRQPVIPR</sequence>
<evidence type="ECO:0000255" key="1">
    <source>
        <dbReference type="HAMAP-Rule" id="MF_01251"/>
    </source>
</evidence>
<evidence type="ECO:0000255" key="2">
    <source>
        <dbReference type="PROSITE-ProRule" id="PRU01266"/>
    </source>
</evidence>
<evidence type="ECO:0000256" key="3">
    <source>
        <dbReference type="SAM" id="MobiDB-lite"/>
    </source>
</evidence>
<evidence type="ECO:0000305" key="4"/>
<dbReference type="EMBL" id="AE015451">
    <property type="protein sequence ID" value="AAN70441.1"/>
    <property type="status" value="ALT_INIT"/>
    <property type="molecule type" value="Genomic_DNA"/>
</dbReference>
<dbReference type="RefSeq" id="NP_746977.3">
    <property type="nucleotide sequence ID" value="NC_002947.4"/>
</dbReference>
<dbReference type="RefSeq" id="WP_010955471.1">
    <property type="nucleotide sequence ID" value="NZ_CP169744.1"/>
</dbReference>
<dbReference type="STRING" id="160488.PP_4872"/>
<dbReference type="PaxDb" id="160488-PP_4872"/>
<dbReference type="KEGG" id="ppu:PP_4872"/>
<dbReference type="PATRIC" id="fig|160488.4.peg.5204"/>
<dbReference type="eggNOG" id="COG1032">
    <property type="taxonomic scope" value="Bacteria"/>
</dbReference>
<dbReference type="HOGENOM" id="CLU_018288_2_0_6"/>
<dbReference type="OrthoDB" id="9803479at2"/>
<dbReference type="PhylomeDB" id="Q88DF3"/>
<dbReference type="Proteomes" id="UP000000556">
    <property type="component" value="Chromosome"/>
</dbReference>
<dbReference type="GO" id="GO:0051539">
    <property type="term" value="F:4 iron, 4 sulfur cluster binding"/>
    <property type="evidence" value="ECO:0007669"/>
    <property type="project" value="UniProtKB-KW"/>
</dbReference>
<dbReference type="GO" id="GO:0003824">
    <property type="term" value="F:catalytic activity"/>
    <property type="evidence" value="ECO:0007669"/>
    <property type="project" value="InterPro"/>
</dbReference>
<dbReference type="GO" id="GO:0005506">
    <property type="term" value="F:iron ion binding"/>
    <property type="evidence" value="ECO:0007669"/>
    <property type="project" value="UniProtKB-UniRule"/>
</dbReference>
<dbReference type="Gene3D" id="3.80.30.20">
    <property type="entry name" value="tm_1862 like domain"/>
    <property type="match status" value="1"/>
</dbReference>
<dbReference type="HAMAP" id="MF_01251">
    <property type="entry name" value="UPF0313"/>
    <property type="match status" value="1"/>
</dbReference>
<dbReference type="InterPro" id="IPR006638">
    <property type="entry name" value="Elp3/MiaA/NifB-like_rSAM"/>
</dbReference>
<dbReference type="InterPro" id="IPR020612">
    <property type="entry name" value="Methylthiotransferase_CS"/>
</dbReference>
<dbReference type="InterPro" id="IPR007197">
    <property type="entry name" value="rSAM"/>
</dbReference>
<dbReference type="InterPro" id="IPR023404">
    <property type="entry name" value="rSAM_horseshoe"/>
</dbReference>
<dbReference type="InterPro" id="IPR022946">
    <property type="entry name" value="UPF0313"/>
</dbReference>
<dbReference type="InterPro" id="IPR024560">
    <property type="entry name" value="UPF0313_C"/>
</dbReference>
<dbReference type="InterPro" id="IPR013704">
    <property type="entry name" value="UPF0313_N"/>
</dbReference>
<dbReference type="NCBIfam" id="TIGR03904">
    <property type="entry name" value="SAM_YgiQ"/>
    <property type="match status" value="1"/>
</dbReference>
<dbReference type="PANTHER" id="PTHR32331">
    <property type="entry name" value="UPF0313 PROTEIN YGIQ"/>
    <property type="match status" value="1"/>
</dbReference>
<dbReference type="PANTHER" id="PTHR32331:SF0">
    <property type="entry name" value="UPF0313 PROTEIN YGIQ"/>
    <property type="match status" value="1"/>
</dbReference>
<dbReference type="Pfam" id="PF11842">
    <property type="entry name" value="DUF3362"/>
    <property type="match status" value="1"/>
</dbReference>
<dbReference type="Pfam" id="PF04055">
    <property type="entry name" value="Radical_SAM"/>
    <property type="match status" value="1"/>
</dbReference>
<dbReference type="Pfam" id="PF08497">
    <property type="entry name" value="Radical_SAM_N"/>
    <property type="match status" value="1"/>
</dbReference>
<dbReference type="SFLD" id="SFLDG01082">
    <property type="entry name" value="B12-binding_domain_containing"/>
    <property type="match status" value="1"/>
</dbReference>
<dbReference type="SFLD" id="SFLDS00029">
    <property type="entry name" value="Radical_SAM"/>
    <property type="match status" value="1"/>
</dbReference>
<dbReference type="SFLD" id="SFLDG01069">
    <property type="entry name" value="UPF0313"/>
    <property type="match status" value="1"/>
</dbReference>
<dbReference type="SMART" id="SM00729">
    <property type="entry name" value="Elp3"/>
    <property type="match status" value="1"/>
</dbReference>
<dbReference type="SUPFAM" id="SSF102114">
    <property type="entry name" value="Radical SAM enzymes"/>
    <property type="match status" value="1"/>
</dbReference>
<dbReference type="PROSITE" id="PS51918">
    <property type="entry name" value="RADICAL_SAM"/>
    <property type="match status" value="1"/>
</dbReference>